<protein>
    <recommendedName>
        <fullName evidence="7">Protein dissatisfaction</fullName>
    </recommendedName>
    <alternativeName>
        <fullName evidence="11">Nuclear receptor subfamily 2 group E member 4</fullName>
    </alternativeName>
</protein>
<reference evidence="10" key="1">
    <citation type="journal article" date="1998" name="Neuron">
        <title>Dissatisfaction encodes a tailless-like nuclear receptor expressed in a subset of CNS neurons controlling Drosophila sexual behavior.</title>
        <authorList>
            <person name="Finley K.D."/>
            <person name="Edeen P.T."/>
            <person name="Foss M."/>
            <person name="Gross E."/>
            <person name="Ghbeish N."/>
            <person name="Palmer R.H."/>
            <person name="Taylor B.J."/>
            <person name="McKeown M."/>
        </authorList>
    </citation>
    <scope>NUCLEOTIDE SEQUENCE [MRNA]</scope>
    <scope>FUNCTION</scope>
    <scope>TISSUE SPECIFICITY</scope>
    <scope>DEVELOPMENTAL STAGE</scope>
    <scope>MUTAGENESIS OF 544-GLN--LYS-691</scope>
</reference>
<reference evidence="13" key="2">
    <citation type="journal article" date="2000" name="Science">
        <title>The genome sequence of Drosophila melanogaster.</title>
        <authorList>
            <person name="Adams M.D."/>
            <person name="Celniker S.E."/>
            <person name="Holt R.A."/>
            <person name="Evans C.A."/>
            <person name="Gocayne J.D."/>
            <person name="Amanatides P.G."/>
            <person name="Scherer S.E."/>
            <person name="Li P.W."/>
            <person name="Hoskins R.A."/>
            <person name="Galle R.F."/>
            <person name="George R.A."/>
            <person name="Lewis S.E."/>
            <person name="Richards S."/>
            <person name="Ashburner M."/>
            <person name="Henderson S.N."/>
            <person name="Sutton G.G."/>
            <person name="Wortman J.R."/>
            <person name="Yandell M.D."/>
            <person name="Zhang Q."/>
            <person name="Chen L.X."/>
            <person name="Brandon R.C."/>
            <person name="Rogers Y.-H.C."/>
            <person name="Blazej R.G."/>
            <person name="Champe M."/>
            <person name="Pfeiffer B.D."/>
            <person name="Wan K.H."/>
            <person name="Doyle C."/>
            <person name="Baxter E.G."/>
            <person name="Helt G."/>
            <person name="Nelson C.R."/>
            <person name="Miklos G.L.G."/>
            <person name="Abril J.F."/>
            <person name="Agbayani A."/>
            <person name="An H.-J."/>
            <person name="Andrews-Pfannkoch C."/>
            <person name="Baldwin D."/>
            <person name="Ballew R.M."/>
            <person name="Basu A."/>
            <person name="Baxendale J."/>
            <person name="Bayraktaroglu L."/>
            <person name="Beasley E.M."/>
            <person name="Beeson K.Y."/>
            <person name="Benos P.V."/>
            <person name="Berman B.P."/>
            <person name="Bhandari D."/>
            <person name="Bolshakov S."/>
            <person name="Borkova D."/>
            <person name="Botchan M.R."/>
            <person name="Bouck J."/>
            <person name="Brokstein P."/>
            <person name="Brottier P."/>
            <person name="Burtis K.C."/>
            <person name="Busam D.A."/>
            <person name="Butler H."/>
            <person name="Cadieu E."/>
            <person name="Center A."/>
            <person name="Chandra I."/>
            <person name="Cherry J.M."/>
            <person name="Cawley S."/>
            <person name="Dahlke C."/>
            <person name="Davenport L.B."/>
            <person name="Davies P."/>
            <person name="de Pablos B."/>
            <person name="Delcher A."/>
            <person name="Deng Z."/>
            <person name="Mays A.D."/>
            <person name="Dew I."/>
            <person name="Dietz S.M."/>
            <person name="Dodson K."/>
            <person name="Doup L.E."/>
            <person name="Downes M."/>
            <person name="Dugan-Rocha S."/>
            <person name="Dunkov B.C."/>
            <person name="Dunn P."/>
            <person name="Durbin K.J."/>
            <person name="Evangelista C.C."/>
            <person name="Ferraz C."/>
            <person name="Ferriera S."/>
            <person name="Fleischmann W."/>
            <person name="Fosler C."/>
            <person name="Gabrielian A.E."/>
            <person name="Garg N.S."/>
            <person name="Gelbart W.M."/>
            <person name="Glasser K."/>
            <person name="Glodek A."/>
            <person name="Gong F."/>
            <person name="Gorrell J.H."/>
            <person name="Gu Z."/>
            <person name="Guan P."/>
            <person name="Harris M."/>
            <person name="Harris N.L."/>
            <person name="Harvey D.A."/>
            <person name="Heiman T.J."/>
            <person name="Hernandez J.R."/>
            <person name="Houck J."/>
            <person name="Hostin D."/>
            <person name="Houston K.A."/>
            <person name="Howland T.J."/>
            <person name="Wei M.-H."/>
            <person name="Ibegwam C."/>
            <person name="Jalali M."/>
            <person name="Kalush F."/>
            <person name="Karpen G.H."/>
            <person name="Ke Z."/>
            <person name="Kennison J.A."/>
            <person name="Ketchum K.A."/>
            <person name="Kimmel B.E."/>
            <person name="Kodira C.D."/>
            <person name="Kraft C.L."/>
            <person name="Kravitz S."/>
            <person name="Kulp D."/>
            <person name="Lai Z."/>
            <person name="Lasko P."/>
            <person name="Lei Y."/>
            <person name="Levitsky A.A."/>
            <person name="Li J.H."/>
            <person name="Li Z."/>
            <person name="Liang Y."/>
            <person name="Lin X."/>
            <person name="Liu X."/>
            <person name="Mattei B."/>
            <person name="McIntosh T.C."/>
            <person name="McLeod M.P."/>
            <person name="McPherson D."/>
            <person name="Merkulov G."/>
            <person name="Milshina N.V."/>
            <person name="Mobarry C."/>
            <person name="Morris J."/>
            <person name="Moshrefi A."/>
            <person name="Mount S.M."/>
            <person name="Moy M."/>
            <person name="Murphy B."/>
            <person name="Murphy L."/>
            <person name="Muzny D.M."/>
            <person name="Nelson D.L."/>
            <person name="Nelson D.R."/>
            <person name="Nelson K.A."/>
            <person name="Nixon K."/>
            <person name="Nusskern D.R."/>
            <person name="Pacleb J.M."/>
            <person name="Palazzolo M."/>
            <person name="Pittman G.S."/>
            <person name="Pan S."/>
            <person name="Pollard J."/>
            <person name="Puri V."/>
            <person name="Reese M.G."/>
            <person name="Reinert K."/>
            <person name="Remington K."/>
            <person name="Saunders R.D.C."/>
            <person name="Scheeler F."/>
            <person name="Shen H."/>
            <person name="Shue B.C."/>
            <person name="Siden-Kiamos I."/>
            <person name="Simpson M."/>
            <person name="Skupski M.P."/>
            <person name="Smith T.J."/>
            <person name="Spier E."/>
            <person name="Spradling A.C."/>
            <person name="Stapleton M."/>
            <person name="Strong R."/>
            <person name="Sun E."/>
            <person name="Svirskas R."/>
            <person name="Tector C."/>
            <person name="Turner R."/>
            <person name="Venter E."/>
            <person name="Wang A.H."/>
            <person name="Wang X."/>
            <person name="Wang Z.-Y."/>
            <person name="Wassarman D.A."/>
            <person name="Weinstock G.M."/>
            <person name="Weissenbach J."/>
            <person name="Williams S.M."/>
            <person name="Woodage T."/>
            <person name="Worley K.C."/>
            <person name="Wu D."/>
            <person name="Yang S."/>
            <person name="Yao Q.A."/>
            <person name="Ye J."/>
            <person name="Yeh R.-F."/>
            <person name="Zaveri J.S."/>
            <person name="Zhan M."/>
            <person name="Zhang G."/>
            <person name="Zhao Q."/>
            <person name="Zheng L."/>
            <person name="Zheng X.H."/>
            <person name="Zhong F.N."/>
            <person name="Zhong W."/>
            <person name="Zhou X."/>
            <person name="Zhu S.C."/>
            <person name="Zhu X."/>
            <person name="Smith H.O."/>
            <person name="Gibbs R.A."/>
            <person name="Myers E.W."/>
            <person name="Rubin G.M."/>
            <person name="Venter J.C."/>
        </authorList>
    </citation>
    <scope>NUCLEOTIDE SEQUENCE [LARGE SCALE GENOMIC DNA]</scope>
    <source>
        <strain evidence="13">Berkeley</strain>
    </source>
</reference>
<reference evidence="13" key="3">
    <citation type="journal article" date="2002" name="Genome Biol.">
        <title>Annotation of the Drosophila melanogaster euchromatic genome: a systematic review.</title>
        <authorList>
            <person name="Misra S."/>
            <person name="Crosby M.A."/>
            <person name="Mungall C.J."/>
            <person name="Matthews B.B."/>
            <person name="Campbell K.S."/>
            <person name="Hradecky P."/>
            <person name="Huang Y."/>
            <person name="Kaminker J.S."/>
            <person name="Millburn G.H."/>
            <person name="Prochnik S.E."/>
            <person name="Smith C.D."/>
            <person name="Tupy J.L."/>
            <person name="Whitfield E.J."/>
            <person name="Bayraktaroglu L."/>
            <person name="Berman B.P."/>
            <person name="Bettencourt B.R."/>
            <person name="Celniker S.E."/>
            <person name="de Grey A.D.N.J."/>
            <person name="Drysdale R.A."/>
            <person name="Harris N.L."/>
            <person name="Richter J."/>
            <person name="Russo S."/>
            <person name="Schroeder A.J."/>
            <person name="Shu S.Q."/>
            <person name="Stapleton M."/>
            <person name="Yamada C."/>
            <person name="Ashburner M."/>
            <person name="Gelbart W.M."/>
            <person name="Rubin G.M."/>
            <person name="Lewis S.E."/>
        </authorList>
    </citation>
    <scope>GENOME REANNOTATION</scope>
    <source>
        <strain evidence="13">Berkeley</strain>
    </source>
</reference>
<reference evidence="8" key="4">
    <citation type="journal article" date="1997" name="Proc. Natl. Acad. Sci. U.S.A.">
        <title>dissatisfaction, a gene involved in sex-specific behavior and neural development of Drosophila melanogaster.</title>
        <authorList>
            <person name="Finley K.D."/>
            <person name="Taylor B.J."/>
            <person name="Milstein M."/>
            <person name="McKeown M."/>
        </authorList>
    </citation>
    <scope>FUNCTION</scope>
    <scope>MUTAGENESIS OF 544-GLN--LYS-691</scope>
</reference>
<reference evidence="8" key="5">
    <citation type="journal article" date="2002" name="Dev. Biol.">
        <title>DSF nuclear receptor acts as a repressor in culture and in vivo.</title>
        <authorList>
            <person name="Pitman J.L."/>
            <person name="Tsai C.C."/>
            <person name="Edeen P.T."/>
            <person name="Finley K.D."/>
            <person name="Evans R.M."/>
            <person name="McKeown M."/>
        </authorList>
    </citation>
    <scope>FUNCTION</scope>
    <scope>REGION</scope>
    <scope>MUTAGENESIS OF HIS-24; 102-LEU--ILE-322; 103-HIS--LYS-691; 172-THR--ILE-322; 173-GLN--LYS-691; 244-SER--LYS-691; 429-SER--LYS-691 AND 527-HIS--LYS-691</scope>
</reference>
<name>DSF_DROME</name>
<proteinExistence type="evidence at protein level"/>
<keyword id="KW-0238">DNA-binding</keyword>
<keyword id="KW-0479">Metal-binding</keyword>
<keyword id="KW-0539">Nucleus</keyword>
<keyword id="KW-0675">Receptor</keyword>
<keyword id="KW-1185">Reference proteome</keyword>
<keyword id="KW-0804">Transcription</keyword>
<keyword id="KW-0805">Transcription regulation</keyword>
<keyword id="KW-0862">Zinc</keyword>
<keyword id="KW-0863">Zinc-finger</keyword>
<gene>
    <name evidence="7 12" type="primary">dsf</name>
    <name evidence="11" type="synonym">NR2E4</name>
    <name evidence="12" type="ORF">CG9019</name>
</gene>
<sequence>MGTAGDRLLDIPCKVCGDRSSGKHYGIYSCDGCSGFFKRSIHRNRIYTCKATGDLKGRCPVDKTHRNQCRACRLAKCFQSAMNKDAVQHERGPRKPKLHPQLHHHHHHAAAAAAAAHHAAAAHHHHHHHHHAHAAAAHHAAVAAAAASGLHHHHHAMPVSLVTNVSASFNYTQHISTHPPAPAAPPSGFHLTASGAQQGPAPPAGHLHHGGAGHQHATAFHHPGHGHALPAPHGGVVSNPGGNSSAISGSGPGSTLPFPSHLLHHNLIAEAASKLPGITATAVAAVVSSTSTPYASAAQTSSPSSNNHNYSSPSPSNSIQSISSIGSRSGGGEEGLSLGSESPRVNVETETPSPSNSPPLSAGSISPAPTLTTSSGSPQHRQMSRHSLSEATTPPSHASLMICASNNNNNNNNNNNNGEHKQSSYTSGSPTPTTPTPPPPRSGVGSTCNTASSSSGFLELLLSPDKCQELIQYQVQHNTLLFPQQLLDSRLLSWEMLQETTARLLFMAVRWVKCLMPFQTLSKNDQHLLLQESWKELFLLNLAQWTIPLDLTPILESPLIRERVLQDEATQTEMKTIQEILCRFRQITPDGSEVGCMKAIALFAPETAGLCDVQPVEMLQDQAQCILSDHVRLRYPRQATRFGRLLLLLPSLRTIRAATIEALFFKETIGNVPIARLLRDMYTMEPAQVDK</sequence>
<organism evidence="13">
    <name type="scientific">Drosophila melanogaster</name>
    <name type="common">Fruit fly</name>
    <dbReference type="NCBI Taxonomy" id="7227"/>
    <lineage>
        <taxon>Eukaryota</taxon>
        <taxon>Metazoa</taxon>
        <taxon>Ecdysozoa</taxon>
        <taxon>Arthropoda</taxon>
        <taxon>Hexapoda</taxon>
        <taxon>Insecta</taxon>
        <taxon>Pterygota</taxon>
        <taxon>Neoptera</taxon>
        <taxon>Endopterygota</taxon>
        <taxon>Diptera</taxon>
        <taxon>Brachycera</taxon>
        <taxon>Muscomorpha</taxon>
        <taxon>Ephydroidea</taxon>
        <taxon>Drosophilidae</taxon>
        <taxon>Drosophila</taxon>
        <taxon>Sophophora</taxon>
    </lineage>
</organism>
<dbReference type="EMBL" id="AF106677">
    <property type="protein sequence ID" value="AAD05225.1"/>
    <property type="molecule type" value="mRNA"/>
</dbReference>
<dbReference type="EMBL" id="AE014134">
    <property type="protein sequence ID" value="AAF52303.1"/>
    <property type="molecule type" value="Genomic_DNA"/>
</dbReference>
<dbReference type="EMBL" id="AE014134">
    <property type="protein sequence ID" value="AGB92645.1"/>
    <property type="molecule type" value="Genomic_DNA"/>
</dbReference>
<dbReference type="RefSeq" id="NP_001260109.1">
    <property type="nucleotide sequence ID" value="NM_001273180.1"/>
</dbReference>
<dbReference type="RefSeq" id="NP_477140.1">
    <property type="nucleotide sequence ID" value="NM_057792.3"/>
</dbReference>
<dbReference type="SMR" id="Q9VML1"/>
<dbReference type="STRING" id="7227.FBpp0305445"/>
<dbReference type="GlyGen" id="Q9VML1">
    <property type="glycosylation" value="2 sites"/>
</dbReference>
<dbReference type="PaxDb" id="7227-FBpp0305445"/>
<dbReference type="EnsemblMetazoa" id="FBtr0079145">
    <property type="protein sequence ID" value="FBpp0078776"/>
    <property type="gene ID" value="FBgn0015381"/>
</dbReference>
<dbReference type="EnsemblMetazoa" id="FBtr0333245">
    <property type="protein sequence ID" value="FBpp0305445"/>
    <property type="gene ID" value="FBgn0015381"/>
</dbReference>
<dbReference type="GeneID" id="33823"/>
<dbReference type="KEGG" id="dme:Dmel_CG9019"/>
<dbReference type="UCSC" id="CG9019-RA">
    <property type="organism name" value="d. melanogaster"/>
</dbReference>
<dbReference type="AGR" id="FB:FBgn0015381"/>
<dbReference type="CTD" id="33823"/>
<dbReference type="FlyBase" id="FBgn0015381">
    <property type="gene designation" value="dsf"/>
</dbReference>
<dbReference type="VEuPathDB" id="VectorBase:FBgn0015381"/>
<dbReference type="eggNOG" id="KOG3575">
    <property type="taxonomic scope" value="Eukaryota"/>
</dbReference>
<dbReference type="HOGENOM" id="CLU_007368_20_3_1"/>
<dbReference type="InParanoid" id="Q9VML1"/>
<dbReference type="OMA" id="YQVQHNA"/>
<dbReference type="OrthoDB" id="5873264at2759"/>
<dbReference type="PhylomeDB" id="Q9VML1"/>
<dbReference type="BioGRID-ORCS" id="33823">
    <property type="hits" value="0 hits in 1 CRISPR screen"/>
</dbReference>
<dbReference type="GenomeRNAi" id="33823"/>
<dbReference type="PRO" id="PR:Q9VML1"/>
<dbReference type="Proteomes" id="UP000000803">
    <property type="component" value="Chromosome 2L"/>
</dbReference>
<dbReference type="Bgee" id="FBgn0015381">
    <property type="expression patterns" value="Expressed in male accessory gland main cell (Drosophila) in male reproductive gland"/>
</dbReference>
<dbReference type="ExpressionAtlas" id="Q9VML1">
    <property type="expression patterns" value="baseline and differential"/>
</dbReference>
<dbReference type="GO" id="GO:0005634">
    <property type="term" value="C:nucleus"/>
    <property type="evidence" value="ECO:0007669"/>
    <property type="project" value="UniProtKB-SubCell"/>
</dbReference>
<dbReference type="GO" id="GO:0003700">
    <property type="term" value="F:DNA-binding transcription factor activity"/>
    <property type="evidence" value="ECO:0000304"/>
    <property type="project" value="FlyBase"/>
</dbReference>
<dbReference type="GO" id="GO:0001227">
    <property type="term" value="F:DNA-binding transcription repressor activity, RNA polymerase II-specific"/>
    <property type="evidence" value="ECO:0000314"/>
    <property type="project" value="FlyBase"/>
</dbReference>
<dbReference type="GO" id="GO:0004879">
    <property type="term" value="F:nuclear receptor activity"/>
    <property type="evidence" value="ECO:0000318"/>
    <property type="project" value="GO_Central"/>
</dbReference>
<dbReference type="GO" id="GO:0003707">
    <property type="term" value="F:nuclear steroid receptor activity"/>
    <property type="evidence" value="ECO:0000303"/>
    <property type="project" value="FlyBase"/>
</dbReference>
<dbReference type="GO" id="GO:0000978">
    <property type="term" value="F:RNA polymerase II cis-regulatory region sequence-specific DNA binding"/>
    <property type="evidence" value="ECO:0000318"/>
    <property type="project" value="GO_Central"/>
</dbReference>
<dbReference type="GO" id="GO:0008270">
    <property type="term" value="F:zinc ion binding"/>
    <property type="evidence" value="ECO:0007669"/>
    <property type="project" value="UniProtKB-KW"/>
</dbReference>
<dbReference type="GO" id="GO:0030154">
    <property type="term" value="P:cell differentiation"/>
    <property type="evidence" value="ECO:0000318"/>
    <property type="project" value="GO_Central"/>
</dbReference>
<dbReference type="GO" id="GO:0007620">
    <property type="term" value="P:copulation"/>
    <property type="evidence" value="ECO:0000303"/>
    <property type="project" value="FlyBase"/>
</dbReference>
<dbReference type="GO" id="GO:0007619">
    <property type="term" value="P:courtship behavior"/>
    <property type="evidence" value="ECO:0000304"/>
    <property type="project" value="FlyBase"/>
</dbReference>
<dbReference type="GO" id="GO:0018991">
    <property type="term" value="P:egg-laying behavior"/>
    <property type="evidence" value="ECO:0000315"/>
    <property type="project" value="FlyBase"/>
</dbReference>
<dbReference type="GO" id="GO:0008049">
    <property type="term" value="P:male courtship behavior"/>
    <property type="evidence" value="ECO:0000304"/>
    <property type="project" value="FlyBase"/>
</dbReference>
<dbReference type="GO" id="GO:0007617">
    <property type="term" value="P:mating behavior"/>
    <property type="evidence" value="ECO:0000303"/>
    <property type="project" value="FlyBase"/>
</dbReference>
<dbReference type="GO" id="GO:0048047">
    <property type="term" value="P:mating behavior, sex discrimination"/>
    <property type="evidence" value="ECO:0000315"/>
    <property type="project" value="FlyBase"/>
</dbReference>
<dbReference type="GO" id="GO:0045924">
    <property type="term" value="P:regulation of female receptivity"/>
    <property type="evidence" value="ECO:0000315"/>
    <property type="project" value="FlyBase"/>
</dbReference>
<dbReference type="GO" id="GO:0035206">
    <property type="term" value="P:regulation of hemocyte proliferation"/>
    <property type="evidence" value="ECO:0000315"/>
    <property type="project" value="FlyBase"/>
</dbReference>
<dbReference type="GO" id="GO:0006357">
    <property type="term" value="P:regulation of transcription by RNA polymerase II"/>
    <property type="evidence" value="ECO:0000250"/>
    <property type="project" value="FlyBase"/>
</dbReference>
<dbReference type="GO" id="GO:0007530">
    <property type="term" value="P:sex determination"/>
    <property type="evidence" value="ECO:0000304"/>
    <property type="project" value="FlyBase"/>
</dbReference>
<dbReference type="GO" id="GO:0018993">
    <property type="term" value="P:somatic sex determination"/>
    <property type="evidence" value="ECO:0000303"/>
    <property type="project" value="FlyBase"/>
</dbReference>
<dbReference type="CDD" id="cd07163">
    <property type="entry name" value="NR_DBD_TLX"/>
    <property type="match status" value="1"/>
</dbReference>
<dbReference type="CDD" id="cd06950">
    <property type="entry name" value="NR_LBD_Tlx_PNR_like"/>
    <property type="match status" value="1"/>
</dbReference>
<dbReference type="FunFam" id="1.10.565.10:FF:000038">
    <property type="entry name" value="Dissatisfaction, isoform A"/>
    <property type="match status" value="1"/>
</dbReference>
<dbReference type="FunFam" id="3.30.50.10:FF:000019">
    <property type="entry name" value="Nuclear receptor subfamily 2 group E member"/>
    <property type="match status" value="1"/>
</dbReference>
<dbReference type="Gene3D" id="3.30.50.10">
    <property type="entry name" value="Erythroid Transcription Factor GATA-1, subunit A"/>
    <property type="match status" value="1"/>
</dbReference>
<dbReference type="Gene3D" id="1.10.565.10">
    <property type="entry name" value="Retinoid X Receptor"/>
    <property type="match status" value="1"/>
</dbReference>
<dbReference type="InterPro" id="IPR035500">
    <property type="entry name" value="NHR-like_dom_sf"/>
</dbReference>
<dbReference type="InterPro" id="IPR000536">
    <property type="entry name" value="Nucl_hrmn_rcpt_lig-bd"/>
</dbReference>
<dbReference type="InterPro" id="IPR050274">
    <property type="entry name" value="Nuclear_hormone_rcpt_NR2"/>
</dbReference>
<dbReference type="InterPro" id="IPR001723">
    <property type="entry name" value="Nuclear_hrmn_rcpt"/>
</dbReference>
<dbReference type="InterPro" id="IPR001628">
    <property type="entry name" value="Znf_hrmn_rcpt"/>
</dbReference>
<dbReference type="InterPro" id="IPR013088">
    <property type="entry name" value="Znf_NHR/GATA"/>
</dbReference>
<dbReference type="PANTHER" id="PTHR24083">
    <property type="entry name" value="NUCLEAR HORMONE RECEPTOR"/>
    <property type="match status" value="1"/>
</dbReference>
<dbReference type="Pfam" id="PF00104">
    <property type="entry name" value="Hormone_recep"/>
    <property type="match status" value="1"/>
</dbReference>
<dbReference type="Pfam" id="PF00105">
    <property type="entry name" value="zf-C4"/>
    <property type="match status" value="1"/>
</dbReference>
<dbReference type="PRINTS" id="PR01282">
    <property type="entry name" value="COUPTNFACTOR"/>
</dbReference>
<dbReference type="PRINTS" id="PR00398">
    <property type="entry name" value="STRDHORMONER"/>
</dbReference>
<dbReference type="PRINTS" id="PR00047">
    <property type="entry name" value="STROIDFINGER"/>
</dbReference>
<dbReference type="SMART" id="SM00430">
    <property type="entry name" value="HOLI"/>
    <property type="match status" value="1"/>
</dbReference>
<dbReference type="SMART" id="SM00399">
    <property type="entry name" value="ZnF_C4"/>
    <property type="match status" value="1"/>
</dbReference>
<dbReference type="SUPFAM" id="SSF57716">
    <property type="entry name" value="Glucocorticoid receptor-like (DNA-binding domain)"/>
    <property type="match status" value="1"/>
</dbReference>
<dbReference type="SUPFAM" id="SSF48508">
    <property type="entry name" value="Nuclear receptor ligand-binding domain"/>
    <property type="match status" value="1"/>
</dbReference>
<dbReference type="PROSITE" id="PS51843">
    <property type="entry name" value="NR_LBD"/>
    <property type="match status" value="1"/>
</dbReference>
<dbReference type="PROSITE" id="PS00031">
    <property type="entry name" value="NUCLEAR_REC_DBD_1"/>
    <property type="match status" value="1"/>
</dbReference>
<dbReference type="PROSITE" id="PS51030">
    <property type="entry name" value="NUCLEAR_REC_DBD_2"/>
    <property type="match status" value="1"/>
</dbReference>
<accession>Q9VML1</accession>
<accession>O96680</accession>
<evidence type="ECO:0000255" key="1">
    <source>
        <dbReference type="PROSITE-ProRule" id="PRU00407"/>
    </source>
</evidence>
<evidence type="ECO:0000255" key="2">
    <source>
        <dbReference type="PROSITE-ProRule" id="PRU01189"/>
    </source>
</evidence>
<evidence type="ECO:0000256" key="3">
    <source>
        <dbReference type="SAM" id="MobiDB-lite"/>
    </source>
</evidence>
<evidence type="ECO:0000269" key="4">
    <source>
    </source>
</evidence>
<evidence type="ECO:0000269" key="5">
    <source>
    </source>
</evidence>
<evidence type="ECO:0000269" key="6">
    <source>
    </source>
</evidence>
<evidence type="ECO:0000303" key="7">
    <source>
    </source>
</evidence>
<evidence type="ECO:0000305" key="8"/>
<evidence type="ECO:0000305" key="9">
    <source>
    </source>
</evidence>
<evidence type="ECO:0000312" key="10">
    <source>
        <dbReference type="EMBL" id="AAD05225.1"/>
    </source>
</evidence>
<evidence type="ECO:0000312" key="11">
    <source>
        <dbReference type="EMBL" id="AAF52303.1"/>
    </source>
</evidence>
<evidence type="ECO:0000312" key="12">
    <source>
        <dbReference type="FlyBase" id="FBgn0015381"/>
    </source>
</evidence>
<evidence type="ECO:0000312" key="13">
    <source>
        <dbReference type="Proteomes" id="UP000000803"/>
    </source>
</evidence>
<feature type="chain" id="PRO_0000452342" description="Protein dissatisfaction">
    <location>
        <begin position="1"/>
        <end position="691"/>
    </location>
</feature>
<feature type="domain" description="NR LBD" evidence="2">
    <location>
        <begin position="452"/>
        <end position="685"/>
    </location>
</feature>
<feature type="DNA-binding region" description="Nuclear receptor" evidence="1">
    <location>
        <begin position="10"/>
        <end position="89"/>
    </location>
</feature>
<feature type="zinc finger region" description="NR C4-type" evidence="1">
    <location>
        <begin position="13"/>
        <end position="33"/>
    </location>
</feature>
<feature type="zinc finger region" description="NR C4-type" evidence="1">
    <location>
        <begin position="49"/>
        <end position="72"/>
    </location>
</feature>
<feature type="region of interest" description="Disordered" evidence="3">
    <location>
        <begin position="85"/>
        <end position="151"/>
    </location>
</feature>
<feature type="region of interest" description="Impairs binding to DNA" evidence="4">
    <location>
        <begin position="103"/>
        <end position="162"/>
    </location>
</feature>
<feature type="region of interest" description="Impairs binding to DNA" evidence="4">
    <location>
        <begin position="172"/>
        <end position="488"/>
    </location>
</feature>
<feature type="region of interest" description="Repressive Function 2 (RF2), important for transcriptional repression" evidence="4">
    <location>
        <begin position="172"/>
        <end position="265"/>
    </location>
</feature>
<feature type="region of interest" description="Disordered" evidence="3">
    <location>
        <begin position="176"/>
        <end position="253"/>
    </location>
</feature>
<feature type="region of interest" description="Disordered" evidence="3">
    <location>
        <begin position="295"/>
        <end position="450"/>
    </location>
</feature>
<feature type="region of interest" description="AF-2" evidence="2">
    <location>
        <begin position="674"/>
        <end position="685"/>
    </location>
</feature>
<feature type="compositionally biased region" description="Basic residues" evidence="3">
    <location>
        <begin position="94"/>
        <end position="109"/>
    </location>
</feature>
<feature type="compositionally biased region" description="Low complexity" evidence="3">
    <location>
        <begin position="110"/>
        <end position="119"/>
    </location>
</feature>
<feature type="compositionally biased region" description="Basic residues" evidence="3">
    <location>
        <begin position="120"/>
        <end position="133"/>
    </location>
</feature>
<feature type="compositionally biased region" description="Low complexity" evidence="3">
    <location>
        <begin position="134"/>
        <end position="149"/>
    </location>
</feature>
<feature type="compositionally biased region" description="Low complexity" evidence="3">
    <location>
        <begin position="214"/>
        <end position="245"/>
    </location>
</feature>
<feature type="compositionally biased region" description="Low complexity" evidence="3">
    <location>
        <begin position="295"/>
        <end position="327"/>
    </location>
</feature>
<feature type="compositionally biased region" description="Low complexity" evidence="3">
    <location>
        <begin position="352"/>
        <end position="361"/>
    </location>
</feature>
<feature type="compositionally biased region" description="Polar residues" evidence="3">
    <location>
        <begin position="363"/>
        <end position="396"/>
    </location>
</feature>
<feature type="compositionally biased region" description="Low complexity" evidence="3">
    <location>
        <begin position="406"/>
        <end position="431"/>
    </location>
</feature>
<feature type="compositionally biased region" description="Pro residues" evidence="3">
    <location>
        <begin position="432"/>
        <end position="441"/>
    </location>
</feature>
<feature type="mutagenesis site" description="In dsf7, greatly decreased DNA binding of fragment 1-102." evidence="4">
    <original>H</original>
    <variation>Y</variation>
    <location>
        <position position="24"/>
    </location>
</feature>
<feature type="mutagenesis site" description="Strong increase in DNA binding." evidence="4">
    <location>
        <begin position="102"/>
        <end position="322"/>
    </location>
</feature>
<feature type="mutagenesis site" description="Very strong increase in DNA binding." evidence="4">
    <location>
        <begin position="103"/>
        <end position="691"/>
    </location>
</feature>
<feature type="mutagenesis site" description="Slight increase in DNA binding." evidence="4">
    <location>
        <begin position="172"/>
        <end position="322"/>
    </location>
</feature>
<feature type="mutagenesis site" description="Increased DNA binding." evidence="4">
    <location>
        <begin position="173"/>
        <end position="691"/>
    </location>
</feature>
<feature type="mutagenesis site" description="Slight increase in DNA binding." evidence="4">
    <location>
        <begin position="244"/>
        <end position="691"/>
    </location>
</feature>
<feature type="mutagenesis site" description="Reduced DNA binding and weakly represses DNA transcription." evidence="4">
    <location>
        <begin position="429"/>
        <end position="691"/>
    </location>
</feature>
<feature type="mutagenesis site" description="Reduced DNA binding." evidence="4">
    <location>
        <begin position="527"/>
        <end position="691"/>
    </location>
</feature>
<feature type="mutagenesis site" description="In dsf1; males and females are sterile due to abnormal courtship behaviors and defects in their sex-specific nervous system. Females display active resistance and rejection behaviors during courtship and copulation. Synapses are also absent on the circumferential muscles of the uterus which likely results in the observed egg-laying defect in which the mature eggs reach the uterus but females are unable to lay them. Males actively court both females and males, and during the final step of courtship display defects in abdominal curling which is required to make genital-genital contact with females. The observed slow abdominal bends during mating is likely due, at least in part, to abnormal innervation of the ventral longitudinal muscles of abdominal segment 5 (A5)." evidence="5 6">
    <location>
        <begin position="544"/>
        <end position="691"/>
    </location>
</feature>
<feature type="sequence conflict" description="In Ref. 1; AAD05225." evidence="8" ref="1">
    <original>V</original>
    <variation>I</variation>
    <location>
        <position position="237"/>
    </location>
</feature>
<feature type="sequence conflict" description="In Ref. 1; AAD05225." evidence="8" ref="1">
    <original>T</original>
    <variation>A</variation>
    <location>
        <position position="300"/>
    </location>
</feature>
<feature type="sequence conflict" description="In Ref. 1; AAD05225." evidence="8" ref="1">
    <original>N</original>
    <variation>NNN</variation>
    <location>
        <position position="417"/>
    </location>
</feature>
<comment type="function">
    <text evidence="4 5 6">Orphan receptor that binds DNA as a monomer to hormone response elements (HRE) containing an extended core motif half-site sequence 5'-AAGTCA-3' (PubMed:11977984). Acts as a transcriptional repressor (PubMed:11977984). In both females and males, functions downstream of tra2 to regulate the development and function of certain sex-specific abdominal neurons, and likely regulates the development and/or function of the nervous system that controls courtship behaviors involved in the recognition and response of adults to appropriate sexual partners (PubMed:11977984, PubMed:9023356, PubMed:9883729). In males, promotes abdominal motor neuronal innervation of the ventral muscles of abdominal segment 5 which is required for correct abdominal curling during copulation (PubMed:9023356, PubMed:9883729). In females, also promotes abdominal motor neuronal innervation but on the uterine muscles which is required for egg laying (PubMed:9023356, PubMed:9883729).</text>
</comment>
<comment type="subcellular location">
    <subcellularLocation>
        <location evidence="9">Nucleus</location>
    </subcellularLocation>
</comment>
<comment type="tissue specificity">
    <text evidence="6">In larvae, pupae and adults, expressed in small subsets of cells in the anterior region of the brain (PubMed:9883729). In pharate adult brains, expressed in around 20 large neurons located close to the antennal lobe and lateral protocerebral neurophils. Also expressed in a small cluster of cells located just below the chemosensory region of the antennal lobe and near the mechanosensory region of the antennal lobe and subesophageal neuropils (PubMed:9883729).</text>
</comment>
<comment type="developmental stage">
    <text evidence="6">Expressed throughout development and in adults.</text>
</comment>
<comment type="similarity">
    <text evidence="8">Belongs to the nuclear hormone receptor family. NR2 subfamily.</text>
</comment>